<organism>
    <name type="scientific">Bacillus subtilis (strain 168)</name>
    <dbReference type="NCBI Taxonomy" id="224308"/>
    <lineage>
        <taxon>Bacteria</taxon>
        <taxon>Bacillati</taxon>
        <taxon>Bacillota</taxon>
        <taxon>Bacilli</taxon>
        <taxon>Bacillales</taxon>
        <taxon>Bacillaceae</taxon>
        <taxon>Bacillus</taxon>
    </lineage>
</organism>
<proteinExistence type="evidence at transcript level"/>
<dbReference type="EMBL" id="Z49884">
    <property type="protein sequence ID" value="CAA90044.1"/>
    <property type="molecule type" value="Genomic_DNA"/>
</dbReference>
<dbReference type="EMBL" id="AL009126">
    <property type="protein sequence ID" value="CAB15757.1"/>
    <property type="molecule type" value="Genomic_DNA"/>
</dbReference>
<dbReference type="PIR" id="S60084">
    <property type="entry name" value="S60084"/>
</dbReference>
<dbReference type="RefSeq" id="NP_391610.1">
    <property type="nucleotide sequence ID" value="NC_000964.3"/>
</dbReference>
<dbReference type="RefSeq" id="WP_003243032.1">
    <property type="nucleotide sequence ID" value="NZ_OZ025638.1"/>
</dbReference>
<dbReference type="SMR" id="P46910"/>
<dbReference type="FunCoup" id="P46910">
    <property type="interactions" value="24"/>
</dbReference>
<dbReference type="STRING" id="224308.BSU37290"/>
<dbReference type="PaxDb" id="224308-BSU37290"/>
<dbReference type="EnsemblBacteria" id="CAB15757">
    <property type="protein sequence ID" value="CAB15757"/>
    <property type="gene ID" value="BSU_37290"/>
</dbReference>
<dbReference type="GeneID" id="937058"/>
<dbReference type="KEGG" id="bsu:BSU37290"/>
<dbReference type="PATRIC" id="fig|224308.179.peg.4040"/>
<dbReference type="eggNOG" id="COG0664">
    <property type="taxonomic scope" value="Bacteria"/>
</dbReference>
<dbReference type="InParanoid" id="P46910"/>
<dbReference type="OrthoDB" id="2928837at2"/>
<dbReference type="BioCyc" id="BSUB:BSU37290-MONOMER"/>
<dbReference type="Proteomes" id="UP000001570">
    <property type="component" value="Chromosome"/>
</dbReference>
<dbReference type="GO" id="GO:0003677">
    <property type="term" value="F:DNA binding"/>
    <property type="evidence" value="ECO:0007669"/>
    <property type="project" value="UniProtKB-KW"/>
</dbReference>
<dbReference type="Gene3D" id="2.60.120.10">
    <property type="entry name" value="Jelly Rolls"/>
    <property type="match status" value="1"/>
</dbReference>
<dbReference type="InterPro" id="IPR018490">
    <property type="entry name" value="cNMP-bd_dom_sf"/>
</dbReference>
<dbReference type="InterPro" id="IPR014710">
    <property type="entry name" value="RmlC-like_jellyroll"/>
</dbReference>
<dbReference type="SUPFAM" id="SSF51206">
    <property type="entry name" value="cAMP-binding domain-like"/>
    <property type="match status" value="1"/>
</dbReference>
<comment type="function">
    <text evidence="1">Activates, in anaerobic conditions, the transcription of the fermentative operons lctEP and alsDS, of the hmp gene encoding a flavohemoglobin-like protein, the nitrite reductase operon nasDE and the heme biosynthesis genes hemN and hemZ.</text>
</comment>
<comment type="induction">
    <text>By fnr. Autorepressed.</text>
</comment>
<accession>P46910</accession>
<evidence type="ECO:0000269" key="1">
    <source>
    </source>
</evidence>
<feature type="chain" id="PRO_0000064664" description="Probable transcription regulator ArfM">
    <location>
        <begin position="1"/>
        <end position="158"/>
    </location>
</feature>
<gene>
    <name type="primary">arfM</name>
    <name type="ordered locus">BSU37290</name>
</gene>
<sequence>MNQCDYLLFLKQLPMFNEVPLSIVETLLKNGTFIRGSCDQSPSFLHSQSVYIVLKGSVRFMDTRLPEGSKTVALWEKGDVFPIDEKGGLYLSPFISVNATSDILILNIPYYIFKKMMSYHPQLQMNFLAMLQQNVFCSYQLFLRYLHTSQDENAEPGS</sequence>
<keyword id="KW-0010">Activator</keyword>
<keyword id="KW-0238">DNA-binding</keyword>
<keyword id="KW-1185">Reference proteome</keyword>
<keyword id="KW-0804">Transcription</keyword>
<keyword id="KW-0805">Transcription regulation</keyword>
<name>ARFM_BACSU</name>
<protein>
    <recommendedName>
        <fullName>Probable transcription regulator ArfM</fullName>
    </recommendedName>
    <alternativeName>
        <fullName>Anaerobic respiration and fermentation modulator</fullName>
    </alternativeName>
</protein>
<reference key="1">
    <citation type="journal article" date="1997" name="Microbiology">
        <title>The Bacillus subtilis genome from gerBC (311 degrees) to licR (334 degrees).</title>
        <authorList>
            <person name="Presecan E."/>
            <person name="Moszer I."/>
            <person name="Boursier L."/>
            <person name="Cruz Ramos H."/>
            <person name="De La Fuente V."/>
            <person name="Hullo M.-F."/>
            <person name="Lelong C."/>
            <person name="Schleich S."/>
            <person name="Sekowska A."/>
            <person name="Song B.H."/>
            <person name="Villani G."/>
            <person name="Kunst F."/>
            <person name="Danchin A."/>
            <person name="Glaser P."/>
        </authorList>
    </citation>
    <scope>NUCLEOTIDE SEQUENCE [GENOMIC DNA]</scope>
    <source>
        <strain>168</strain>
    </source>
</reference>
<reference key="2">
    <citation type="journal article" date="1997" name="Nature">
        <title>The complete genome sequence of the Gram-positive bacterium Bacillus subtilis.</title>
        <authorList>
            <person name="Kunst F."/>
            <person name="Ogasawara N."/>
            <person name="Moszer I."/>
            <person name="Albertini A.M."/>
            <person name="Alloni G."/>
            <person name="Azevedo V."/>
            <person name="Bertero M.G."/>
            <person name="Bessieres P."/>
            <person name="Bolotin A."/>
            <person name="Borchert S."/>
            <person name="Borriss R."/>
            <person name="Boursier L."/>
            <person name="Brans A."/>
            <person name="Braun M."/>
            <person name="Brignell S.C."/>
            <person name="Bron S."/>
            <person name="Brouillet S."/>
            <person name="Bruschi C.V."/>
            <person name="Caldwell B."/>
            <person name="Capuano V."/>
            <person name="Carter N.M."/>
            <person name="Choi S.-K."/>
            <person name="Codani J.-J."/>
            <person name="Connerton I.F."/>
            <person name="Cummings N.J."/>
            <person name="Daniel R.A."/>
            <person name="Denizot F."/>
            <person name="Devine K.M."/>
            <person name="Duesterhoeft A."/>
            <person name="Ehrlich S.D."/>
            <person name="Emmerson P.T."/>
            <person name="Entian K.-D."/>
            <person name="Errington J."/>
            <person name="Fabret C."/>
            <person name="Ferrari E."/>
            <person name="Foulger D."/>
            <person name="Fritz C."/>
            <person name="Fujita M."/>
            <person name="Fujita Y."/>
            <person name="Fuma S."/>
            <person name="Galizzi A."/>
            <person name="Galleron N."/>
            <person name="Ghim S.-Y."/>
            <person name="Glaser P."/>
            <person name="Goffeau A."/>
            <person name="Golightly E.J."/>
            <person name="Grandi G."/>
            <person name="Guiseppi G."/>
            <person name="Guy B.J."/>
            <person name="Haga K."/>
            <person name="Haiech J."/>
            <person name="Harwood C.R."/>
            <person name="Henaut A."/>
            <person name="Hilbert H."/>
            <person name="Holsappel S."/>
            <person name="Hosono S."/>
            <person name="Hullo M.-F."/>
            <person name="Itaya M."/>
            <person name="Jones L.-M."/>
            <person name="Joris B."/>
            <person name="Karamata D."/>
            <person name="Kasahara Y."/>
            <person name="Klaerr-Blanchard M."/>
            <person name="Klein C."/>
            <person name="Kobayashi Y."/>
            <person name="Koetter P."/>
            <person name="Koningstein G."/>
            <person name="Krogh S."/>
            <person name="Kumano M."/>
            <person name="Kurita K."/>
            <person name="Lapidus A."/>
            <person name="Lardinois S."/>
            <person name="Lauber J."/>
            <person name="Lazarevic V."/>
            <person name="Lee S.-M."/>
            <person name="Levine A."/>
            <person name="Liu H."/>
            <person name="Masuda S."/>
            <person name="Mauel C."/>
            <person name="Medigue C."/>
            <person name="Medina N."/>
            <person name="Mellado R.P."/>
            <person name="Mizuno M."/>
            <person name="Moestl D."/>
            <person name="Nakai S."/>
            <person name="Noback M."/>
            <person name="Noone D."/>
            <person name="O'Reilly M."/>
            <person name="Ogawa K."/>
            <person name="Ogiwara A."/>
            <person name="Oudega B."/>
            <person name="Park S.-H."/>
            <person name="Parro V."/>
            <person name="Pohl T.M."/>
            <person name="Portetelle D."/>
            <person name="Porwollik S."/>
            <person name="Prescott A.M."/>
            <person name="Presecan E."/>
            <person name="Pujic P."/>
            <person name="Purnelle B."/>
            <person name="Rapoport G."/>
            <person name="Rey M."/>
            <person name="Reynolds S."/>
            <person name="Rieger M."/>
            <person name="Rivolta C."/>
            <person name="Rocha E."/>
            <person name="Roche B."/>
            <person name="Rose M."/>
            <person name="Sadaie Y."/>
            <person name="Sato T."/>
            <person name="Scanlan E."/>
            <person name="Schleich S."/>
            <person name="Schroeter R."/>
            <person name="Scoffone F."/>
            <person name="Sekiguchi J."/>
            <person name="Sekowska A."/>
            <person name="Seror S.J."/>
            <person name="Serror P."/>
            <person name="Shin B.-S."/>
            <person name="Soldo B."/>
            <person name="Sorokin A."/>
            <person name="Tacconi E."/>
            <person name="Takagi T."/>
            <person name="Takahashi H."/>
            <person name="Takemaru K."/>
            <person name="Takeuchi M."/>
            <person name="Tamakoshi A."/>
            <person name="Tanaka T."/>
            <person name="Terpstra P."/>
            <person name="Tognoni A."/>
            <person name="Tosato V."/>
            <person name="Uchiyama S."/>
            <person name="Vandenbol M."/>
            <person name="Vannier F."/>
            <person name="Vassarotti A."/>
            <person name="Viari A."/>
            <person name="Wambutt R."/>
            <person name="Wedler E."/>
            <person name="Wedler H."/>
            <person name="Weitzenegger T."/>
            <person name="Winters P."/>
            <person name="Wipat A."/>
            <person name="Yamamoto H."/>
            <person name="Yamane K."/>
            <person name="Yasumoto K."/>
            <person name="Yata K."/>
            <person name="Yoshida K."/>
            <person name="Yoshikawa H.-F."/>
            <person name="Zumstein E."/>
            <person name="Yoshikawa H."/>
            <person name="Danchin A."/>
        </authorList>
    </citation>
    <scope>NUCLEOTIDE SEQUENCE [LARGE SCALE GENOMIC DNA]</scope>
    <source>
        <strain>168</strain>
    </source>
</reference>
<reference key="3">
    <citation type="journal article" date="2001" name="J. Bacteriol.">
        <title>Modulation of anaerobic energy metabolism of Bacillus subtilis by arfM (ywiD).</title>
        <authorList>
            <person name="Marino M."/>
            <person name="Cruz Ramos H."/>
            <person name="Hoffmann T."/>
            <person name="Glaser P."/>
            <person name="Jahn D."/>
        </authorList>
    </citation>
    <scope>FUNCTION</scope>
    <source>
        <strain>168</strain>
    </source>
</reference>